<dbReference type="EMBL" id="X03000">
    <property type="protein sequence ID" value="CAA26758.1"/>
    <property type="molecule type" value="Genomic_DNA"/>
</dbReference>
<dbReference type="EMBL" id="X03000">
    <property type="protein sequence ID" value="CAA26759.1"/>
    <property type="molecule type" value="Genomic_DNA"/>
</dbReference>
<dbReference type="EMBL" id="X03000">
    <property type="protein sequence ID" value="CAA26760.1"/>
    <property type="molecule type" value="Genomic_DNA"/>
</dbReference>
<dbReference type="EMBL" id="M38648">
    <property type="protein sequence ID" value="AAA42453.1"/>
    <property type="molecule type" value="Genomic_DNA"/>
</dbReference>
<dbReference type="EMBL" id="M38648">
    <property type="protein sequence ID" value="AAA42454.1"/>
    <property type="molecule type" value="Genomic_DNA"/>
</dbReference>
<dbReference type="EMBL" id="M38648">
    <property type="protein sequence ID" value="AAA42455.1"/>
    <property type="molecule type" value="Genomic_DNA"/>
</dbReference>
<dbReference type="PIR" id="A03826">
    <property type="entry name" value="WMAD87"/>
</dbReference>
<dbReference type="PIR" id="A03827">
    <property type="entry name" value="WMAD67"/>
</dbReference>
<dbReference type="GO" id="GO:0042025">
    <property type="term" value="C:host cell nucleus"/>
    <property type="evidence" value="ECO:0007669"/>
    <property type="project" value="UniProtKB-SubCell"/>
</dbReference>
<dbReference type="GO" id="GO:0008270">
    <property type="term" value="F:zinc ion binding"/>
    <property type="evidence" value="ECO:0007669"/>
    <property type="project" value="UniProtKB-KW"/>
</dbReference>
<dbReference type="GO" id="GO:0006355">
    <property type="term" value="P:regulation of DNA-templated transcription"/>
    <property type="evidence" value="ECO:0007669"/>
    <property type="project" value="InterPro"/>
</dbReference>
<dbReference type="GO" id="GO:0039645">
    <property type="term" value="P:symbiont-mediated perturbation of host cell cycle G1/S transition checkpoint"/>
    <property type="evidence" value="ECO:0007669"/>
    <property type="project" value="UniProtKB-KW"/>
</dbReference>
<dbReference type="GO" id="GO:0039648">
    <property type="term" value="P:symbiont-mediated perturbation of host ubiquitin-like protein modification"/>
    <property type="evidence" value="ECO:0007669"/>
    <property type="project" value="UniProtKB-KW"/>
</dbReference>
<dbReference type="GO" id="GO:0052170">
    <property type="term" value="P:symbiont-mediated suppression of host innate immune response"/>
    <property type="evidence" value="ECO:0007669"/>
    <property type="project" value="UniProtKB-KW"/>
</dbReference>
<dbReference type="GO" id="GO:0039563">
    <property type="term" value="P:symbiont-mediated suppression of host JAK-STAT cascade via inhibition of STAT1 activity"/>
    <property type="evidence" value="ECO:0007669"/>
    <property type="project" value="UniProtKB-KW"/>
</dbReference>
<dbReference type="GO" id="GO:0039502">
    <property type="term" value="P:symbiont-mediated suppression of host type I interferon-mediated signaling pathway"/>
    <property type="evidence" value="ECO:0007669"/>
    <property type="project" value="UniProtKB-KW"/>
</dbReference>
<dbReference type="InterPro" id="IPR014410">
    <property type="entry name" value="Aden_E1A"/>
</dbReference>
<dbReference type="Pfam" id="PF02703">
    <property type="entry name" value="Adeno_E1A"/>
    <property type="match status" value="1"/>
</dbReference>
<dbReference type="PIRSF" id="PIRSF003669">
    <property type="entry name" value="Aden_E1A"/>
    <property type="match status" value="1"/>
</dbReference>
<protein>
    <recommendedName>
        <fullName>Early E1A protein</fullName>
    </recommendedName>
    <alternativeName>
        <fullName>Early E1A 28 kDa protein</fullName>
    </alternativeName>
</protein>
<organism>
    <name type="scientific">Human adenovirus B serotype 7</name>
    <name type="common">HAdV-7</name>
    <name type="synonym">Human adenovirus 7</name>
    <dbReference type="NCBI Taxonomy" id="10519"/>
    <lineage>
        <taxon>Viruses</taxon>
        <taxon>Varidnaviria</taxon>
        <taxon>Bamfordvirae</taxon>
        <taxon>Preplasmiviricota</taxon>
        <taxon>Tectiliviricetes</taxon>
        <taxon>Rowavirales</taxon>
        <taxon>Adenoviridae</taxon>
        <taxon>Mastadenovirus</taxon>
        <taxon>Human mastadenovirus B</taxon>
    </lineage>
</organism>
<organismHost>
    <name type="scientific">Homo sapiens</name>
    <name type="common">Human</name>
    <dbReference type="NCBI Taxonomy" id="9606"/>
</organismHost>
<comment type="function">
    <text evidence="3">Plays a role in viral genome replication by driving entry of quiescent cells into the cell cycle. Stimulation of progression from G1 to S phase allows the virus to efficiently use the cellular DNA replicating machinery to achieve viral genome replication. E1A protein has both transforming and trans-activating activities. Induces the disassembly of the E2F1 transcription factor from RB1 by direct competition for the same binding site on RB1, with subsequent transcriptional activation of E2F1-regulated S-phase genes and of the E2 region of the adenoviral genome. Release of E2F1 leads to the ARF-mediated inhibition of MDM2 and causes TP53/p53 to accumulate because it is not targeted for degradation by MDM2-mediated ubiquitination anymore. This increase in TP53, in turn, would arrest the cell proliferation and direct its death but this effect is counteracted by the viral protein E1B-55K. Inactivation of the ability of RB1 to arrest the cell cycle is critical for cellular transformation, uncontrolled cellular growth and proliferation induced by viral infection. Interaction with RBX1 and CUL1 inhibits ubiquitination of the proteins targeted by SCF(FBXW7) ubiquitin ligase complex, and may be linked to unregulated host cell proliferation. The tumorigenesis-restraining activity of E1A may be related to the disruption of the host CtBP-CtIP complex through the CtBP binding motif. Interaction with host TMEM173/STING impairs the ability of TMEM173/STING to sense cytosolic DNA and promote the production of type I interferon (IFN-alpha and IFN-beta). Promotes the sumoylation of host ZBED1/hDREF with SUMO1 (By similarity).</text>
</comment>
<comment type="subunit">
    <text evidence="2 3">Interacts with host UBE2I; this interaction interferes with polySUMOylation. Interacts with host RB1; this interaction induces the aberrant dissociation of RB1-E2F1 complex thereby disrupting the activity of RB1 and activating E2F1-regulated genes. Interacts with host ATF7; the interaction enhances ATF7-mediated viral transactivation activity which requires the zinc binding domains of both proteins. Isoform early E1A 32 kDa protein and isoform early E1A 26 kDa protein interact (via N-terminus) with CUL1 and E3 ubiquitin ligase RBX1; these interactions inhibit RBX1-CUL1-dependent elongation reaction of ubiquitin chains and attenuate ubiquitination of SCF(FBXW7) target proteins. Interacts (via PXLXP motif) with host ZMYND11/BS69 (via MYND-type zinc finger); this interaction inhibits E1A mediated transactivation. Interacts with host EP300; this interaction stimulates the acetylation of RB1 by recruiting EP300 and RB1 into a multimeric-protein complex. Interacts with host CTBP1 and CTBP2; this interaction seems to potentiate viral replication. Interacts with host DCAF7. Interacts with host DYRK1A. Interacts with host KPNA4; this interaction allows E1A import into the host nucleus. Interacts with host EP400; this interaction stabilizes MYC. Interacts with host TBP protein; this interaction probably disrupts the TBP-TATA complex. Interacts (via LXCXE motif) with host TMEM173/STING; this interaction impairs the ability of TMEM173/STING to sense cytosolic DNA and promote the production of type I interferon (IFN-alpha and IFN-beta). Interacts (via C-terminus) with host ZBED1/hDREF (via C-terminus); the interaction is direct (By similarity).</text>
</comment>
<comment type="subcellular location">
    <subcellularLocation>
        <location evidence="3">Host nucleus</location>
    </subcellularLocation>
</comment>
<comment type="alternative products">
    <event type="alternative splicing"/>
    <isoform>
        <id>P03256-1</id>
        <name>early E1A 28 kDa protein</name>
        <sequence type="displayed"/>
    </isoform>
    <isoform>
        <id>P03256-2</id>
        <name>early E1A 24 kDa protein</name>
        <sequence type="described" ref="VSP_000199"/>
    </isoform>
    <isoform>
        <id>P03256-3</id>
        <name>early E1A 6.3 kDa protein</name>
        <sequence type="described" ref="VSP_028920 VSP_028921"/>
    </isoform>
    <text>Isoforms are derived from the E1 region of the genome.</text>
</comment>
<comment type="similarity">
    <text evidence="6">Belongs to the adenoviridae E1A protein family.</text>
</comment>
<proteinExistence type="inferred from homology"/>
<keyword id="KW-0010">Activator</keyword>
<keyword id="KW-0025">Alternative splicing</keyword>
<keyword id="KW-0244">Early protein</keyword>
<keyword id="KW-1078">G1/S host cell cycle checkpoint dysregulation by virus</keyword>
<keyword id="KW-1048">Host nucleus</keyword>
<keyword id="KW-0945">Host-virus interaction</keyword>
<keyword id="KW-1090">Inhibition of host innate immune response by virus</keyword>
<keyword id="KW-1114">Inhibition of host interferon signaling pathway by virus</keyword>
<keyword id="KW-1105">Inhibition of host STAT1 by virus</keyword>
<keyword id="KW-0922">Interferon antiviral system evasion</keyword>
<keyword id="KW-0479">Metal-binding</keyword>
<keyword id="KW-1121">Modulation of host cell cycle by virus</keyword>
<keyword id="KW-1123">Modulation of host E3 ubiquitin ligases by virus</keyword>
<keyword id="KW-1130">Modulation of host ubiquitin pathway by virus</keyword>
<keyword id="KW-0553">Oncogene</keyword>
<keyword id="KW-0804">Transcription</keyword>
<keyword id="KW-0805">Transcription regulation</keyword>
<keyword id="KW-0899">Viral immunoevasion</keyword>
<keyword id="KW-0862">Zinc</keyword>
<keyword id="KW-0863">Zinc-finger</keyword>
<accession>P03256</accession>
<accession>P03257</accession>
<feature type="chain" id="PRO_0000221695" description="Early E1A protein">
    <location>
        <begin position="1"/>
        <end position="261"/>
    </location>
</feature>
<feature type="zinc finger region" evidence="2">
    <location>
        <begin position="163"/>
        <end position="183"/>
    </location>
</feature>
<feature type="region of interest" description="Interaction with RB1 in competition with E2F1" evidence="1">
    <location>
        <begin position="43"/>
        <end position="51"/>
    </location>
</feature>
<feature type="region of interest" description="Interaction with UBE2I" evidence="1">
    <location>
        <begin position="78"/>
        <end position="149"/>
    </location>
</feature>
<feature type="region of interest" description="Disordered" evidence="5">
    <location>
        <begin position="197"/>
        <end position="261"/>
    </location>
</feature>
<feature type="short sequence motif" description="PXLXP motif, interaction with host ZMYND11" evidence="1">
    <location>
        <begin position="106"/>
        <end position="110"/>
    </location>
</feature>
<feature type="short sequence motif" description="LXCXE motif, interaction with host RB1 and TMEM173/STING" evidence="4">
    <location>
        <begin position="115"/>
        <end position="119"/>
    </location>
</feature>
<feature type="short sequence motif" description="PXDLS motif, CTBP-binding" evidence="1">
    <location>
        <begin position="250"/>
        <end position="254"/>
    </location>
</feature>
<feature type="short sequence motif" description="Nuclear localization signal" evidence="4">
    <location>
        <begin position="256"/>
        <end position="261"/>
    </location>
</feature>
<feature type="compositionally biased region" description="Low complexity" evidence="5">
    <location>
        <begin position="203"/>
        <end position="212"/>
    </location>
</feature>
<feature type="splice variant" id="VSP_028920" description="In isoform early E1A 6.3 kDa protein." evidence="6">
    <original>NTLMGDDPEPPVQPFDPPTLHDLYDLEVDGPE</original>
    <variation>LCLMMSHLLLIQLPHLLKFRRPHLQTYASPFL</variation>
    <location>
        <begin position="26"/>
        <end position="57"/>
    </location>
</feature>
<feature type="splice variant" id="VSP_028921" description="In isoform early E1A 6.3 kDa protein." evidence="6">
    <location>
        <begin position="58"/>
        <end position="261"/>
    </location>
</feature>
<feature type="splice variant" id="VSP_000199" description="In isoform early E1A 24 kDa protein." evidence="6">
    <location>
        <begin position="164"/>
        <end position="194"/>
    </location>
</feature>
<feature type="sequence variant" description="In strain: Grider.">
    <original>G</original>
    <variation>E</variation>
    <location>
        <position position="62"/>
    </location>
</feature>
<feature type="sequence variant" description="In strain: Grider.">
    <original>P</original>
    <variation>G</variation>
    <location>
        <position position="202"/>
    </location>
</feature>
<reference key="1">
    <citation type="journal article" date="1980" name="Gene">
        <title>Gene organization of the transforming region of weakly oncogenic adenovirus type 7: the E1a region.</title>
        <authorList>
            <person name="Dijkema R."/>
            <person name="Dekker B.M.M."/>
            <person name="van Ormondt H."/>
            <person name="de Waard A."/>
            <person name="Maat J."/>
            <person name="Boyer H.W."/>
        </authorList>
    </citation>
    <scope>NUCLEOTIDE SEQUENCE [GENOMIC DNA] (ISOFORMS EARLY E1A 28 KDA PROTEIN; EARLY E1A 24 KDA PROTEIN AND EARLY E1A 6.3 KDA PROTEIN)</scope>
    <source>
        <strain>Gomen</strain>
    </source>
</reference>
<reference key="2">
    <citation type="journal article" date="1984" name="Tumor Res.">
        <title>The nucleotide sequence of the transforming HindIII-I.J fragment of adenovirus type 7 DNA.</title>
        <authorList>
            <person name="Yoshida K."/>
            <person name="Fujinaga K."/>
        </authorList>
    </citation>
    <scope>NUCLEOTIDE SEQUENCE [GENOMIC DNA] (ISOFORMS EARLY E1A 28 KDA PROTEIN; EARLY E1A 24 KDA PROTEIN AND EARLY E1A 6.3 KDA PROTEIN)</scope>
    <source>
        <strain>Grider</strain>
    </source>
</reference>
<evidence type="ECO:0000250" key="1"/>
<evidence type="ECO:0000250" key="2">
    <source>
        <dbReference type="UniProtKB" id="P03254"/>
    </source>
</evidence>
<evidence type="ECO:0000250" key="3">
    <source>
        <dbReference type="UniProtKB" id="P03255"/>
    </source>
</evidence>
<evidence type="ECO:0000255" key="4"/>
<evidence type="ECO:0000256" key="5">
    <source>
        <dbReference type="SAM" id="MobiDB-lite"/>
    </source>
</evidence>
<evidence type="ECO:0000305" key="6"/>
<name>E1A_ADE07</name>
<sequence length="261" mass="28385">MRHLRFLPQEIISSETGIEILEFVVNTLMGDDPEPPVQPFDPPTLHDLYDLEVDGPEDPNEGAVNGFFTDSMLLAADEGLDINPPPETLVTPGVVVESGRGGKKLPDLGAAEMDLRCYEEGFPPSDDEDGETEQSIHTAVNEGVKAASDVFKLDCPELPGHGCKSCEFHRNNTGMKELLCSLCYMRMHCHFIYSPVSDDESPSPDSTTSPPEIQAPAPANVCKPIPVKPKPGKRPAVDKLEDLLEGGDGPLDLSTRKLPRQ</sequence>